<evidence type="ECO:0000255" key="1">
    <source>
        <dbReference type="PROSITE-ProRule" id="PRU00698"/>
    </source>
</evidence>
<evidence type="ECO:0000255" key="2">
    <source>
        <dbReference type="PROSITE-ProRule" id="PRU00768"/>
    </source>
</evidence>
<evidence type="ECO:0000256" key="3">
    <source>
        <dbReference type="SAM" id="MobiDB-lite"/>
    </source>
</evidence>
<evidence type="ECO:0000269" key="4">
    <source>
    </source>
</evidence>
<evidence type="ECO:0000303" key="5">
    <source>
    </source>
</evidence>
<evidence type="ECO:0000303" key="6">
    <source>
    </source>
</evidence>
<evidence type="ECO:0000305" key="7"/>
<evidence type="ECO:0000312" key="8">
    <source>
        <dbReference type="Araport" id="AT1G22730"/>
    </source>
</evidence>
<evidence type="ECO:0000312" key="9">
    <source>
        <dbReference type="EMBL" id="AAC25511.1"/>
    </source>
</evidence>
<organism>
    <name type="scientific">Arabidopsis thaliana</name>
    <name type="common">Mouse-ear cress</name>
    <dbReference type="NCBI Taxonomy" id="3702"/>
    <lineage>
        <taxon>Eukaryota</taxon>
        <taxon>Viridiplantae</taxon>
        <taxon>Streptophyta</taxon>
        <taxon>Embryophyta</taxon>
        <taxon>Tracheophyta</taxon>
        <taxon>Spermatophyta</taxon>
        <taxon>Magnoliopsida</taxon>
        <taxon>eudicotyledons</taxon>
        <taxon>Gunneridae</taxon>
        <taxon>Pentapetalae</taxon>
        <taxon>rosids</taxon>
        <taxon>malvids</taxon>
        <taxon>Brassicales</taxon>
        <taxon>Brassicaceae</taxon>
        <taxon>Camelineae</taxon>
        <taxon>Arabidopsis</taxon>
    </lineage>
</organism>
<name>MRF2_ARATH</name>
<accession>O80548</accession>
<accession>O64378</accession>
<comment type="function">
    <text evidence="4">Involved in target of rapamycin (TOR)-regulated translation control, especially under energy-deficient conditions.</text>
</comment>
<comment type="subunit">
    <text evidence="4">Binds to EIF4A1 (PubMed:29084871). The association with ribosomes is modulated by cellular energy status and TOR activity (PubMed:29084871).</text>
</comment>
<comment type="subcellular location">
    <subcellularLocation>
        <location evidence="2">Nucleus</location>
    </subcellularLocation>
    <subcellularLocation>
        <location evidence="4">Cytoplasm</location>
        <location evidence="4">Cytosol</location>
    </subcellularLocation>
</comment>
<comment type="tissue specificity">
    <text evidence="4">Mostly expressed in reproductive tissues, such as flower buds and flowers, and, to a lower extent, in vegetative tissues, such as leaves, roots and stems.</text>
</comment>
<comment type="induction">
    <text evidence="4">Induced by dark and starvation.</text>
</comment>
<comment type="disruption phenotype">
    <text evidence="4">Increased susceptibility to dark and starvation, and to treatment with the TOR inhibitor (PubMed:29084871). Decreased translation activity associated with altered ribosome patterns, especially in the dark and starvation conditions, in which mRNAs distribution is altered and rRNA abnormally degraded (PubMed:29084871). Slightly early flowering time under long-day conditions (PubMed:29084871).</text>
</comment>
<comment type="similarity">
    <text evidence="7">Belongs to the PDCD4 family.</text>
</comment>
<comment type="sequence caution" evidence="7">
    <conflict type="frameshift">
        <sequence resource="EMBL-CDS" id="CAA72903"/>
    </conflict>
</comment>
<proteinExistence type="evidence at protein level"/>
<reference key="1">
    <citation type="journal article" date="2000" name="Nature">
        <title>Sequence and analysis of chromosome 1 of the plant Arabidopsis thaliana.</title>
        <authorList>
            <person name="Theologis A."/>
            <person name="Ecker J.R."/>
            <person name="Palm C.J."/>
            <person name="Federspiel N.A."/>
            <person name="Kaul S."/>
            <person name="White O."/>
            <person name="Alonso J."/>
            <person name="Altafi H."/>
            <person name="Araujo R."/>
            <person name="Bowman C.L."/>
            <person name="Brooks S.Y."/>
            <person name="Buehler E."/>
            <person name="Chan A."/>
            <person name="Chao Q."/>
            <person name="Chen H."/>
            <person name="Cheuk R.F."/>
            <person name="Chin C.W."/>
            <person name="Chung M.K."/>
            <person name="Conn L."/>
            <person name="Conway A.B."/>
            <person name="Conway A.R."/>
            <person name="Creasy T.H."/>
            <person name="Dewar K."/>
            <person name="Dunn P."/>
            <person name="Etgu P."/>
            <person name="Feldblyum T.V."/>
            <person name="Feng J.-D."/>
            <person name="Fong B."/>
            <person name="Fujii C.Y."/>
            <person name="Gill J.E."/>
            <person name="Goldsmith A.D."/>
            <person name="Haas B."/>
            <person name="Hansen N.F."/>
            <person name="Hughes B."/>
            <person name="Huizar L."/>
            <person name="Hunter J.L."/>
            <person name="Jenkins J."/>
            <person name="Johnson-Hopson C."/>
            <person name="Khan S."/>
            <person name="Khaykin E."/>
            <person name="Kim C.J."/>
            <person name="Koo H.L."/>
            <person name="Kremenetskaia I."/>
            <person name="Kurtz D.B."/>
            <person name="Kwan A."/>
            <person name="Lam B."/>
            <person name="Langin-Hooper S."/>
            <person name="Lee A."/>
            <person name="Lee J.M."/>
            <person name="Lenz C.A."/>
            <person name="Li J.H."/>
            <person name="Li Y.-P."/>
            <person name="Lin X."/>
            <person name="Liu S.X."/>
            <person name="Liu Z.A."/>
            <person name="Luros J.S."/>
            <person name="Maiti R."/>
            <person name="Marziali A."/>
            <person name="Militscher J."/>
            <person name="Miranda M."/>
            <person name="Nguyen M."/>
            <person name="Nierman W.C."/>
            <person name="Osborne B.I."/>
            <person name="Pai G."/>
            <person name="Peterson J."/>
            <person name="Pham P.K."/>
            <person name="Rizzo M."/>
            <person name="Rooney T."/>
            <person name="Rowley D."/>
            <person name="Sakano H."/>
            <person name="Salzberg S.L."/>
            <person name="Schwartz J.R."/>
            <person name="Shinn P."/>
            <person name="Southwick A.M."/>
            <person name="Sun H."/>
            <person name="Tallon L.J."/>
            <person name="Tambunga G."/>
            <person name="Toriumi M.J."/>
            <person name="Town C.D."/>
            <person name="Utterback T."/>
            <person name="Van Aken S."/>
            <person name="Vaysberg M."/>
            <person name="Vysotskaia V.S."/>
            <person name="Walker M."/>
            <person name="Wu D."/>
            <person name="Yu G."/>
            <person name="Fraser C.M."/>
            <person name="Venter J.C."/>
            <person name="Davis R.W."/>
        </authorList>
    </citation>
    <scope>NUCLEOTIDE SEQUENCE [LARGE SCALE GENOMIC DNA]</scope>
    <source>
        <strain>cv. Columbia</strain>
    </source>
</reference>
<reference key="2">
    <citation type="journal article" date="2017" name="Plant J.">
        <title>Araport11: a complete reannotation of the Arabidopsis thaliana reference genome.</title>
        <authorList>
            <person name="Cheng C.Y."/>
            <person name="Krishnakumar V."/>
            <person name="Chan A.P."/>
            <person name="Thibaud-Nissen F."/>
            <person name="Schobel S."/>
            <person name="Town C.D."/>
        </authorList>
    </citation>
    <scope>GENOME REANNOTATION</scope>
    <source>
        <strain>cv. Columbia</strain>
    </source>
</reference>
<reference key="3">
    <citation type="journal article" date="2003" name="Science">
        <title>Empirical analysis of transcriptional activity in the Arabidopsis genome.</title>
        <authorList>
            <person name="Yamada K."/>
            <person name="Lim J."/>
            <person name="Dale J.M."/>
            <person name="Chen H."/>
            <person name="Shinn P."/>
            <person name="Palm C.J."/>
            <person name="Southwick A.M."/>
            <person name="Wu H.C."/>
            <person name="Kim C.J."/>
            <person name="Nguyen M."/>
            <person name="Pham P.K."/>
            <person name="Cheuk R.F."/>
            <person name="Karlin-Newmann G."/>
            <person name="Liu S.X."/>
            <person name="Lam B."/>
            <person name="Sakano H."/>
            <person name="Wu T."/>
            <person name="Yu G."/>
            <person name="Miranda M."/>
            <person name="Quach H.L."/>
            <person name="Tripp M."/>
            <person name="Chang C.H."/>
            <person name="Lee J.M."/>
            <person name="Toriumi M.J."/>
            <person name="Chan M.M."/>
            <person name="Tang C.C."/>
            <person name="Onodera C.S."/>
            <person name="Deng J.M."/>
            <person name="Akiyama K."/>
            <person name="Ansari Y."/>
            <person name="Arakawa T."/>
            <person name="Banh J."/>
            <person name="Banno F."/>
            <person name="Bowser L."/>
            <person name="Brooks S.Y."/>
            <person name="Carninci P."/>
            <person name="Chao Q."/>
            <person name="Choy N."/>
            <person name="Enju A."/>
            <person name="Goldsmith A.D."/>
            <person name="Gurjal M."/>
            <person name="Hansen N.F."/>
            <person name="Hayashizaki Y."/>
            <person name="Johnson-Hopson C."/>
            <person name="Hsuan V.W."/>
            <person name="Iida K."/>
            <person name="Karnes M."/>
            <person name="Khan S."/>
            <person name="Koesema E."/>
            <person name="Ishida J."/>
            <person name="Jiang P.X."/>
            <person name="Jones T."/>
            <person name="Kawai J."/>
            <person name="Kamiya A."/>
            <person name="Meyers C."/>
            <person name="Nakajima M."/>
            <person name="Narusaka M."/>
            <person name="Seki M."/>
            <person name="Sakurai T."/>
            <person name="Satou M."/>
            <person name="Tamse R."/>
            <person name="Vaysberg M."/>
            <person name="Wallender E.K."/>
            <person name="Wong C."/>
            <person name="Yamamura Y."/>
            <person name="Yuan S."/>
            <person name="Shinozaki K."/>
            <person name="Davis R.W."/>
            <person name="Theologis A."/>
            <person name="Ecker J.R."/>
        </authorList>
    </citation>
    <scope>NUCLEOTIDE SEQUENCE [LARGE SCALE MRNA]</scope>
    <source>
        <strain>cv. Columbia</strain>
    </source>
</reference>
<reference key="4">
    <citation type="journal article" date="1997" name="FEBS Lett.">
        <title>Sequence analysis of a 24-kb contiguous genomic region at the Arabidopsis thaliana PFL locus on chromosome 1.</title>
        <authorList>
            <person name="Terryn N."/>
            <person name="Neyt P."/>
            <person name="de Clercq R."/>
            <person name="de Keyser A."/>
            <person name="van den Daele H."/>
            <person name="Ardiles W."/>
            <person name="Dehais P."/>
            <person name="Rouze P."/>
            <person name="Gielen J."/>
            <person name="Villarroel R."/>
            <person name="van Montagu M."/>
        </authorList>
    </citation>
    <scope>NUCLEOTIDE SEQUENCE [GENOMIC DNA] OF 79-693</scope>
    <source>
        <strain>cv. Columbia</strain>
    </source>
</reference>
<reference key="5">
    <citation type="journal article" date="2013" name="BMC Evol. Biol.">
        <title>The unique evolution of the programmed cell death 4 protein in plants.</title>
        <authorList>
            <person name="Cheng S."/>
            <person name="Liu R."/>
            <person name="Gallie D.R."/>
        </authorList>
    </citation>
    <scope>GENE FAMILY</scope>
</reference>
<reference key="6">
    <citation type="journal article" date="2017" name="Plant Cell">
        <title>MRF family genes are involved in translation control, especially under energy-deficient conditions, and their expression and functions are modulated by the TOR signaling pathway.</title>
        <authorList>
            <person name="Lee D.-H."/>
            <person name="Park S.J."/>
            <person name="Ahn C.S."/>
            <person name="Pai H.-S."/>
        </authorList>
    </citation>
    <scope>FUNCTION</scope>
    <scope>DISRUPTION PHENOTYPE</scope>
    <scope>INDUCTION BY DARK AND STARVATION</scope>
    <scope>TISSUE SPECIFICITY</scope>
    <scope>INTERACTION WITH EIF4A1 AND RIBOSOMES</scope>
    <scope>SUBCELLULAR LOCATION</scope>
    <scope>GENE FAMILY</scope>
    <scope>NOMENCLATURE</scope>
    <source>
        <strain>cv. Columbia</strain>
    </source>
</reference>
<protein>
    <recommendedName>
        <fullName evidence="6">MA3 DOMAIN-CONTAINING TRANSLATION REGULATORY FACTOR 2</fullName>
    </recommendedName>
    <alternativeName>
        <fullName evidence="5">MA3 domain-containing protein 8</fullName>
    </alternativeName>
</protein>
<dbReference type="EMBL" id="AC003979">
    <property type="protein sequence ID" value="AAC25511.1"/>
    <property type="molecule type" value="Genomic_DNA"/>
</dbReference>
<dbReference type="EMBL" id="CP002684">
    <property type="protein sequence ID" value="AEE30278.1"/>
    <property type="molecule type" value="Genomic_DNA"/>
</dbReference>
<dbReference type="EMBL" id="AY034972">
    <property type="protein sequence ID" value="AAK59477.1"/>
    <property type="molecule type" value="mRNA"/>
</dbReference>
<dbReference type="EMBL" id="AY133820">
    <property type="protein sequence ID" value="AAM91754.1"/>
    <property type="molecule type" value="mRNA"/>
</dbReference>
<dbReference type="EMBL" id="Y12227">
    <property type="protein sequence ID" value="CAA72903.1"/>
    <property type="status" value="ALT_FRAME"/>
    <property type="molecule type" value="Genomic_DNA"/>
</dbReference>
<dbReference type="PIR" id="T00771">
    <property type="entry name" value="T00771"/>
</dbReference>
<dbReference type="RefSeq" id="NP_173687.1">
    <property type="nucleotide sequence ID" value="NM_102120.3"/>
</dbReference>
<dbReference type="SMR" id="O80548"/>
<dbReference type="FunCoup" id="O80548">
    <property type="interactions" value="2558"/>
</dbReference>
<dbReference type="STRING" id="3702.O80548"/>
<dbReference type="iPTMnet" id="O80548"/>
<dbReference type="PaxDb" id="3702-AT1G22730.1"/>
<dbReference type="ProteomicsDB" id="183755"/>
<dbReference type="EnsemblPlants" id="AT1G22730.1">
    <property type="protein sequence ID" value="AT1G22730.1"/>
    <property type="gene ID" value="AT1G22730"/>
</dbReference>
<dbReference type="GeneID" id="838879"/>
<dbReference type="Gramene" id="AT1G22730.1">
    <property type="protein sequence ID" value="AT1G22730.1"/>
    <property type="gene ID" value="AT1G22730"/>
</dbReference>
<dbReference type="KEGG" id="ath:AT1G22730"/>
<dbReference type="Araport" id="AT1G22730"/>
<dbReference type="TAIR" id="AT1G22730">
    <property type="gene designation" value="MRF2"/>
</dbReference>
<dbReference type="eggNOG" id="KOG0403">
    <property type="taxonomic scope" value="Eukaryota"/>
</dbReference>
<dbReference type="HOGENOM" id="CLU_013764_1_0_1"/>
<dbReference type="InParanoid" id="O80548"/>
<dbReference type="OMA" id="CKLTESC"/>
<dbReference type="PhylomeDB" id="O80548"/>
<dbReference type="PRO" id="PR:O80548"/>
<dbReference type="Proteomes" id="UP000006548">
    <property type="component" value="Chromosome 1"/>
</dbReference>
<dbReference type="ExpressionAtlas" id="O80548">
    <property type="expression patterns" value="baseline and differential"/>
</dbReference>
<dbReference type="GO" id="GO:0005829">
    <property type="term" value="C:cytosol"/>
    <property type="evidence" value="ECO:0000314"/>
    <property type="project" value="TAIR"/>
</dbReference>
<dbReference type="GO" id="GO:0005634">
    <property type="term" value="C:nucleus"/>
    <property type="evidence" value="ECO:0007669"/>
    <property type="project" value="UniProtKB-SubCell"/>
</dbReference>
<dbReference type="GO" id="GO:0043022">
    <property type="term" value="F:ribosome binding"/>
    <property type="evidence" value="ECO:0000314"/>
    <property type="project" value="UniProtKB"/>
</dbReference>
<dbReference type="GO" id="GO:0045892">
    <property type="term" value="P:negative regulation of DNA-templated transcription"/>
    <property type="evidence" value="ECO:0007669"/>
    <property type="project" value="InterPro"/>
</dbReference>
<dbReference type="GO" id="GO:0006417">
    <property type="term" value="P:regulation of translation"/>
    <property type="evidence" value="ECO:0007669"/>
    <property type="project" value="UniProtKB-KW"/>
</dbReference>
<dbReference type="GO" id="GO:0009646">
    <property type="term" value="P:response to absence of light"/>
    <property type="evidence" value="ECO:0000270"/>
    <property type="project" value="TAIR"/>
</dbReference>
<dbReference type="GO" id="GO:0090549">
    <property type="term" value="P:response to carbon starvation"/>
    <property type="evidence" value="ECO:0000270"/>
    <property type="project" value="TAIR"/>
</dbReference>
<dbReference type="FunFam" id="1.25.40.180:FF:000008">
    <property type="entry name" value="Programmed cell death protein 4"/>
    <property type="match status" value="2"/>
</dbReference>
<dbReference type="FunFam" id="1.25.40.180:FF:000009">
    <property type="entry name" value="programmed cell death protein 4"/>
    <property type="match status" value="2"/>
</dbReference>
<dbReference type="Gene3D" id="1.25.40.180">
    <property type="match status" value="4"/>
</dbReference>
<dbReference type="InterPro" id="IPR016024">
    <property type="entry name" value="ARM-type_fold"/>
</dbReference>
<dbReference type="InterPro" id="IPR003891">
    <property type="entry name" value="Initiation_fac_eIF4g_MI"/>
</dbReference>
<dbReference type="InterPro" id="IPR039778">
    <property type="entry name" value="PDCD4"/>
</dbReference>
<dbReference type="PANTHER" id="PTHR12626:SF2">
    <property type="entry name" value="MA3 DOMAIN-CONTAINING TRANSLATION REGULATORY FACTOR 2"/>
    <property type="match status" value="1"/>
</dbReference>
<dbReference type="PANTHER" id="PTHR12626">
    <property type="entry name" value="PROGRAMMED CELL DEATH 4"/>
    <property type="match status" value="1"/>
</dbReference>
<dbReference type="Pfam" id="PF02847">
    <property type="entry name" value="MA3"/>
    <property type="match status" value="4"/>
</dbReference>
<dbReference type="SMART" id="SM00544">
    <property type="entry name" value="MA3"/>
    <property type="match status" value="4"/>
</dbReference>
<dbReference type="SUPFAM" id="SSF48371">
    <property type="entry name" value="ARM repeat"/>
    <property type="match status" value="4"/>
</dbReference>
<dbReference type="PROSITE" id="PS51366">
    <property type="entry name" value="MI"/>
    <property type="match status" value="4"/>
</dbReference>
<feature type="chain" id="PRO_0000447575" description="MA3 DOMAIN-CONTAINING TRANSLATION REGULATORY FACTOR 2">
    <location>
        <begin position="1"/>
        <end position="693"/>
    </location>
</feature>
<feature type="domain" description="MI 1" evidence="1">
    <location>
        <begin position="90"/>
        <end position="211"/>
    </location>
</feature>
<feature type="domain" description="MI 2" evidence="1">
    <location>
        <begin position="254"/>
        <end position="375"/>
    </location>
</feature>
<feature type="domain" description="MI 3" evidence="1">
    <location>
        <begin position="389"/>
        <end position="510"/>
    </location>
</feature>
<feature type="domain" description="MI 4" evidence="1">
    <location>
        <begin position="560"/>
        <end position="681"/>
    </location>
</feature>
<feature type="region of interest" description="Disordered" evidence="3">
    <location>
        <begin position="25"/>
        <end position="60"/>
    </location>
</feature>
<feature type="region of interest" description="Disordered" evidence="3">
    <location>
        <begin position="673"/>
        <end position="693"/>
    </location>
</feature>
<feature type="short sequence motif" description="Nuclear localization signal 1" evidence="2">
    <location>
        <begin position="241"/>
        <end position="248"/>
    </location>
</feature>
<feature type="short sequence motif" description="Nuclear localization signal 2" evidence="2">
    <location>
        <begin position="430"/>
        <end position="437"/>
    </location>
</feature>
<feature type="compositionally biased region" description="Low complexity" evidence="3">
    <location>
        <begin position="683"/>
        <end position="693"/>
    </location>
</feature>
<sequence>MEHQDLTDSRKDPLCISQLKISSSSLDPLPQANMAEDLTKSRRHSPIKVEGSEETWGVEDDDDLTDPIFDTIEGNGHSDPTSCFDADLSEYKKKATVIVEEYFGTNDVVSVVNELKELGMAEYRYYFVKKLVSMAMDRHDKEKEMAAFLLSTLYADVIDPPEVYRGFNKLVASADDLSVDIPDAVDVLAVFVARAIVDDILPPAFLKKQMKLLPDNSKGVEVLRKAEKSYLATPLHAEVVEKRWGGTDNWTAEDVKARINDLLKEYVMSGDKKEAFRCIKGLKVPFFHHEIVKRALIMAMERRKAQVRLLDLLKETIEVGLINSTQVTKGFSRIIDSIEDLSLDIPDARRILQSFISKAASEGWLCASSLKSLSADAGEKLLENSSANVFKDKAKSIIREYFLSGDTSEVVHCLDTELNASSSQLRAIFVKYLITLAMDRKKREKEMACVLVSTLGFPPKDVRSAFSMLIESADDTALDNPVVVEDLAMFLARAVVDEVLAPRDLEEVLNQTPEAGSSVGEKVIQMAKTLLKARLSGERILRCWGGGGIETNSPGSTVKEVKEKIQILLEEYVSGGDLREASRCVKELGMPFFHHEVVKKSVVRIIEEKENEERLWKLLKVCFDSGLVTIYQMTKGFKRVDESLEDLSLDVPDAAKKFSSCVERGKLEGFLDESFASEDSQSKKQNGSSSSSG</sequence>
<keyword id="KW-0963">Cytoplasm</keyword>
<keyword id="KW-0539">Nucleus</keyword>
<keyword id="KW-1185">Reference proteome</keyword>
<keyword id="KW-0677">Repeat</keyword>
<keyword id="KW-0810">Translation regulation</keyword>
<gene>
    <name evidence="6" type="primary">MRF2</name>
    <name evidence="5" type="synonym">MAT8</name>
    <name evidence="8" type="ordered locus">At1g22730</name>
    <name evidence="9" type="ORF">T22J18.10</name>
</gene>